<comment type="function">
    <text>Transfer of C3 units between the cytosol of mesophyll and bundle sheath cells to maintain a nitrogen-carbon balance in the C4-dicarboxylic pathway.</text>
</comment>
<comment type="catalytic activity">
    <reaction>
        <text>L-alanine + 2-oxoglutarate = pyruvate + L-glutamate</text>
        <dbReference type="Rhea" id="RHEA:19453"/>
        <dbReference type="ChEBI" id="CHEBI:15361"/>
        <dbReference type="ChEBI" id="CHEBI:16810"/>
        <dbReference type="ChEBI" id="CHEBI:29985"/>
        <dbReference type="ChEBI" id="CHEBI:57972"/>
        <dbReference type="EC" id="2.6.1.2"/>
    </reaction>
</comment>
<comment type="cofactor">
    <cofactor>
        <name>pyridoxal 5'-phosphate</name>
        <dbReference type="ChEBI" id="CHEBI:597326"/>
    </cofactor>
</comment>
<comment type="pathway">
    <text>Photosynthesis; C4 acid pathway.</text>
</comment>
<comment type="pathway">
    <text>Amino-acid degradation; L-alanine degradation via transaminase pathway; pyruvate from L-alanine: step 1/1.</text>
</comment>
<comment type="subunit">
    <text evidence="1">Homodimer.</text>
</comment>
<comment type="similarity">
    <text evidence="2">Belongs to the class-I pyridoxal-phosphate-dependent aminotransferase family. Alanine aminotransferase subfamily.</text>
</comment>
<name>ALA2_HORVU</name>
<sequence>MAATVAVDNLNPKVLKCEYAVRGEIVIHAQRLQEQLKTQPGSLPFDEILYCNIGNPQSLGQQPVTFFREVLALCDHPDLLQREEIKTLFSADSISRAKQILAMIPGRATGAYSHSQGIKGLRDAIASGIASRDGFPANADDIFLTDGASPGVHLMMQLLIRNEKDGILVPIPQYPLYSASIALHGGALVPYYLNESTGWGLETSDVKKQLEDARSRGINVRALVVINPGNPTGQVLAEENQYDIVKFCKNEGLVLLADEVYQENIYVDNKKFHSFKKIVRSLGYGEEDLPLVSYQSVSKGYYGECGKRGGYFEITGFSAPVREQIYKIASVNLCSNITGQILASLVMNPPKASDESYASYKAEKDGILASLARRAKALEHAFNKLEGITCNEAEGAMYVFPQICLPQKAIEAAKAANKAPDAFYALRLLESTGIVVVPGSGFGQVPGTWHFRCTILPQEDKIPAVISRFTVFHEAFMSEYRD</sequence>
<feature type="chain" id="PRO_0000123939" description="Alanine aminotransferase 2">
    <location>
        <begin position="1"/>
        <end position="482"/>
    </location>
</feature>
<feature type="modified residue" description="N6-(pyridoxal phosphate)lysine" evidence="1">
    <location>
        <position position="299"/>
    </location>
</feature>
<feature type="helix" evidence="3">
    <location>
        <begin position="7"/>
        <end position="9"/>
    </location>
</feature>
<feature type="helix" evidence="3">
    <location>
        <begin position="12"/>
        <end position="16"/>
    </location>
</feature>
<feature type="helix" evidence="3">
    <location>
        <begin position="20"/>
        <end position="22"/>
    </location>
</feature>
<feature type="helix" evidence="3">
    <location>
        <begin position="24"/>
        <end position="38"/>
    </location>
</feature>
<feature type="strand" evidence="3">
    <location>
        <begin position="42"/>
        <end position="47"/>
    </location>
</feature>
<feature type="helix" evidence="3">
    <location>
        <begin position="56"/>
        <end position="58"/>
    </location>
</feature>
<feature type="helix" evidence="3">
    <location>
        <begin position="65"/>
        <end position="75"/>
    </location>
</feature>
<feature type="helix" evidence="3">
    <location>
        <begin position="77"/>
        <end position="81"/>
    </location>
</feature>
<feature type="helix" evidence="3">
    <location>
        <begin position="85"/>
        <end position="88"/>
    </location>
</feature>
<feature type="helix" evidence="3">
    <location>
        <begin position="91"/>
        <end position="101"/>
    </location>
</feature>
<feature type="strand" evidence="3">
    <location>
        <begin position="109"/>
        <end position="111"/>
    </location>
</feature>
<feature type="helix" evidence="3">
    <location>
        <begin position="119"/>
        <end position="133"/>
    </location>
</feature>
<feature type="helix" evidence="3">
    <location>
        <begin position="139"/>
        <end position="141"/>
    </location>
</feature>
<feature type="strand" evidence="3">
    <location>
        <begin position="142"/>
        <end position="148"/>
    </location>
</feature>
<feature type="helix" evidence="3">
    <location>
        <begin position="149"/>
        <end position="159"/>
    </location>
</feature>
<feature type="strand" evidence="3">
    <location>
        <begin position="165"/>
        <end position="172"/>
    </location>
</feature>
<feature type="helix" evidence="3">
    <location>
        <begin position="176"/>
        <end position="183"/>
    </location>
</feature>
<feature type="strand" evidence="3">
    <location>
        <begin position="187"/>
        <end position="192"/>
    </location>
</feature>
<feature type="turn" evidence="3">
    <location>
        <begin position="195"/>
        <end position="198"/>
    </location>
</feature>
<feature type="helix" evidence="3">
    <location>
        <begin position="203"/>
        <end position="215"/>
    </location>
</feature>
<feature type="strand" evidence="3">
    <location>
        <begin position="219"/>
        <end position="228"/>
    </location>
</feature>
<feature type="turn" evidence="3">
    <location>
        <begin position="230"/>
        <end position="232"/>
    </location>
</feature>
<feature type="helix" evidence="3">
    <location>
        <begin position="238"/>
        <end position="251"/>
    </location>
</feature>
<feature type="strand" evidence="3">
    <location>
        <begin position="254"/>
        <end position="258"/>
    </location>
</feature>
<feature type="turn" evidence="3">
    <location>
        <begin position="260"/>
        <end position="263"/>
    </location>
</feature>
<feature type="helix" evidence="3">
    <location>
        <begin position="275"/>
        <end position="281"/>
    </location>
</feature>
<feature type="strand" evidence="3">
    <location>
        <begin position="285"/>
        <end position="287"/>
    </location>
</feature>
<feature type="strand" evidence="3">
    <location>
        <begin position="291"/>
        <end position="299"/>
    </location>
</feature>
<feature type="turn" evidence="3">
    <location>
        <begin position="300"/>
        <end position="302"/>
    </location>
</feature>
<feature type="helix" evidence="3">
    <location>
        <begin position="305"/>
        <end position="307"/>
    </location>
</feature>
<feature type="strand" evidence="3">
    <location>
        <begin position="310"/>
        <end position="316"/>
    </location>
</feature>
<feature type="helix" evidence="3">
    <location>
        <begin position="321"/>
        <end position="330"/>
    </location>
</feature>
<feature type="helix" evidence="3">
    <location>
        <begin position="337"/>
        <end position="347"/>
    </location>
</feature>
<feature type="strand" evidence="3">
    <location>
        <begin position="352"/>
        <end position="354"/>
    </location>
</feature>
<feature type="helix" evidence="3">
    <location>
        <begin position="356"/>
        <end position="383"/>
    </location>
</feature>
<feature type="strand" evidence="3">
    <location>
        <begin position="395"/>
        <end position="399"/>
    </location>
</feature>
<feature type="helix" evidence="3">
    <location>
        <begin position="407"/>
        <end position="416"/>
    </location>
</feature>
<feature type="helix" evidence="3">
    <location>
        <begin position="420"/>
        <end position="432"/>
    </location>
</feature>
<feature type="strand" evidence="3">
    <location>
        <begin position="437"/>
        <end position="439"/>
    </location>
</feature>
<feature type="turn" evidence="3">
    <location>
        <begin position="440"/>
        <end position="442"/>
    </location>
</feature>
<feature type="strand" evidence="3">
    <location>
        <begin position="450"/>
        <end position="455"/>
    </location>
</feature>
<feature type="turn" evidence="3">
    <location>
        <begin position="459"/>
        <end position="461"/>
    </location>
</feature>
<feature type="helix" evidence="3">
    <location>
        <begin position="462"/>
        <end position="480"/>
    </location>
</feature>
<reference key="1">
    <citation type="journal article" date="1994" name="Plant Mol. Biol.">
        <title>Hypoxically inducible barley alanine aminotransferase: cDNA cloning and expression analysis.</title>
        <authorList>
            <person name="Muench D.G."/>
            <person name="Good A.G."/>
        </authorList>
    </citation>
    <scope>NUCLEOTIDE SEQUENCE [MRNA]</scope>
    <source>
        <strain>cv. Himalaya</strain>
        <tissue>Root</tissue>
    </source>
</reference>
<dbReference type="EC" id="2.6.1.2"/>
<dbReference type="EMBL" id="Z26322">
    <property type="protein sequence ID" value="CAA81231.1"/>
    <property type="molecule type" value="mRNA"/>
</dbReference>
<dbReference type="PIR" id="S42535">
    <property type="entry name" value="S42535"/>
</dbReference>
<dbReference type="PDB" id="3TCM">
    <property type="method" value="X-ray"/>
    <property type="resolution" value="2.71 A"/>
    <property type="chains" value="A/B=1-482"/>
</dbReference>
<dbReference type="PDBsum" id="3TCM"/>
<dbReference type="SMR" id="P52894"/>
<dbReference type="BRENDA" id="2.6.1.2">
    <property type="organism ID" value="2687"/>
</dbReference>
<dbReference type="SABIO-RK" id="P52894"/>
<dbReference type="UniPathway" id="UPA00322"/>
<dbReference type="UniPathway" id="UPA00528">
    <property type="reaction ID" value="UER00586"/>
</dbReference>
<dbReference type="EvolutionaryTrace" id="P52894"/>
<dbReference type="ExpressionAtlas" id="P52894">
    <property type="expression patterns" value="baseline and differential"/>
</dbReference>
<dbReference type="GO" id="GO:0004021">
    <property type="term" value="F:L-alanine:2-oxoglutarate aminotransferase activity"/>
    <property type="evidence" value="ECO:0007669"/>
    <property type="project" value="UniProtKB-EC"/>
</dbReference>
<dbReference type="GO" id="GO:0030170">
    <property type="term" value="F:pyridoxal phosphate binding"/>
    <property type="evidence" value="ECO:0007669"/>
    <property type="project" value="InterPro"/>
</dbReference>
<dbReference type="GO" id="GO:0009058">
    <property type="term" value="P:biosynthetic process"/>
    <property type="evidence" value="ECO:0007669"/>
    <property type="project" value="InterPro"/>
</dbReference>
<dbReference type="GO" id="GO:0042853">
    <property type="term" value="P:L-alanine catabolic process"/>
    <property type="evidence" value="ECO:0007669"/>
    <property type="project" value="UniProtKB-UniPathway"/>
</dbReference>
<dbReference type="CDD" id="cd00609">
    <property type="entry name" value="AAT_like"/>
    <property type="match status" value="1"/>
</dbReference>
<dbReference type="FunFam" id="3.90.1150.10:FF:000140">
    <property type="entry name" value="alanine aminotransferase 1"/>
    <property type="match status" value="2"/>
</dbReference>
<dbReference type="FunFam" id="1.10.287.1970:FF:000001">
    <property type="entry name" value="Alanine aminotransferase 2"/>
    <property type="match status" value="1"/>
</dbReference>
<dbReference type="FunFam" id="3.40.640.10:FF:000012">
    <property type="entry name" value="alanine aminotransferase 2"/>
    <property type="match status" value="1"/>
</dbReference>
<dbReference type="Gene3D" id="1.10.287.1970">
    <property type="match status" value="1"/>
</dbReference>
<dbReference type="Gene3D" id="3.90.1150.10">
    <property type="entry name" value="Aspartate Aminotransferase, domain 1"/>
    <property type="match status" value="1"/>
</dbReference>
<dbReference type="Gene3D" id="3.40.640.10">
    <property type="entry name" value="Type I PLP-dependent aspartate aminotransferase-like (Major domain)"/>
    <property type="match status" value="1"/>
</dbReference>
<dbReference type="InterPro" id="IPR045088">
    <property type="entry name" value="ALAT1/2-like"/>
</dbReference>
<dbReference type="InterPro" id="IPR004839">
    <property type="entry name" value="Aminotransferase_I/II_large"/>
</dbReference>
<dbReference type="InterPro" id="IPR015424">
    <property type="entry name" value="PyrdxlP-dep_Trfase"/>
</dbReference>
<dbReference type="InterPro" id="IPR015421">
    <property type="entry name" value="PyrdxlP-dep_Trfase_major"/>
</dbReference>
<dbReference type="InterPro" id="IPR015422">
    <property type="entry name" value="PyrdxlP-dep_Trfase_small"/>
</dbReference>
<dbReference type="PANTHER" id="PTHR11751">
    <property type="entry name" value="ALANINE AMINOTRANSFERASE"/>
    <property type="match status" value="1"/>
</dbReference>
<dbReference type="PANTHER" id="PTHR11751:SF479">
    <property type="entry name" value="ALANINE TRANSAMINASE"/>
    <property type="match status" value="1"/>
</dbReference>
<dbReference type="Pfam" id="PF00155">
    <property type="entry name" value="Aminotran_1_2"/>
    <property type="match status" value="1"/>
</dbReference>
<dbReference type="SUPFAM" id="SSF53383">
    <property type="entry name" value="PLP-dependent transferases"/>
    <property type="match status" value="1"/>
</dbReference>
<keyword id="KW-0002">3D-structure</keyword>
<keyword id="KW-0032">Aminotransferase</keyword>
<keyword id="KW-0663">Pyridoxal phosphate</keyword>
<keyword id="KW-0808">Transferase</keyword>
<organism>
    <name type="scientific">Hordeum vulgare</name>
    <name type="common">Barley</name>
    <dbReference type="NCBI Taxonomy" id="4513"/>
    <lineage>
        <taxon>Eukaryota</taxon>
        <taxon>Viridiplantae</taxon>
        <taxon>Streptophyta</taxon>
        <taxon>Embryophyta</taxon>
        <taxon>Tracheophyta</taxon>
        <taxon>Spermatophyta</taxon>
        <taxon>Magnoliopsida</taxon>
        <taxon>Liliopsida</taxon>
        <taxon>Poales</taxon>
        <taxon>Poaceae</taxon>
        <taxon>BOP clade</taxon>
        <taxon>Pooideae</taxon>
        <taxon>Triticodae</taxon>
        <taxon>Triticeae</taxon>
        <taxon>Hordeinae</taxon>
        <taxon>Hordeum</taxon>
    </lineage>
</organism>
<evidence type="ECO:0000250" key="1"/>
<evidence type="ECO:0000305" key="2"/>
<evidence type="ECO:0007829" key="3">
    <source>
        <dbReference type="PDB" id="3TCM"/>
    </source>
</evidence>
<accession>P52894</accession>
<protein>
    <recommendedName>
        <fullName>Alanine aminotransferase 2</fullName>
        <shortName>ALAAT-2</shortName>
        <ecNumber>2.6.1.2</ecNumber>
    </recommendedName>
    <alternativeName>
        <fullName>Glutamate pyruvate transaminase 2</fullName>
        <shortName>GPT</shortName>
    </alternativeName>
    <alternativeName>
        <fullName>Glutamic--alanine transaminase 2</fullName>
    </alternativeName>
    <alternativeName>
        <fullName>Glutamic--pyruvic transaminase 2</fullName>
    </alternativeName>
</protein>
<proteinExistence type="evidence at protein level"/>